<reference key="1">
    <citation type="journal article" date="2011" name="J. Bacteriol.">
        <title>Complete genome sequence and updated annotation of Desulfovibrio alaskensis G20.</title>
        <authorList>
            <person name="Hauser L.J."/>
            <person name="Land M.L."/>
            <person name="Brown S.D."/>
            <person name="Larimer F."/>
            <person name="Keller K.L."/>
            <person name="Rapp-Giles B.J."/>
            <person name="Price M.N."/>
            <person name="Lin M."/>
            <person name="Bruce D.C."/>
            <person name="Detter J.C."/>
            <person name="Tapia R."/>
            <person name="Han C.S."/>
            <person name="Goodwin L.A."/>
            <person name="Cheng J.F."/>
            <person name="Pitluck S."/>
            <person name="Copeland A."/>
            <person name="Lucas S."/>
            <person name="Nolan M."/>
            <person name="Lapidus A.L."/>
            <person name="Palumbo A.V."/>
            <person name="Wall J.D."/>
        </authorList>
    </citation>
    <scope>NUCLEOTIDE SEQUENCE [LARGE SCALE GENOMIC DNA]</scope>
    <source>
        <strain>ATCC BAA-1058 / DSM 17464 / G20</strain>
    </source>
</reference>
<reference evidence="6 7 8" key="2">
    <citation type="journal article" date="2015" name="Biochemistry">
        <title>Experimental strategies for functional annotation and metabolism discovery: targeted screening of solute binding proteins and unbiased panning of metabolomes.</title>
        <authorList>
            <person name="Vetting M.W."/>
            <person name="Al-Obaidi N."/>
            <person name="Zhao S."/>
            <person name="San Francisco B."/>
            <person name="Kim J."/>
            <person name="Wichelecki D.J."/>
            <person name="Bouvier J.T."/>
            <person name="Solbiati J.O."/>
            <person name="Vu H."/>
            <person name="Zhang X."/>
            <person name="Rodionov D.A."/>
            <person name="Love J.D."/>
            <person name="Hillerich B.S."/>
            <person name="Seidel R.D."/>
            <person name="Quinn R.J."/>
            <person name="Osterman A.L."/>
            <person name="Cronan J.E."/>
            <person name="Jacobson M.P."/>
            <person name="Gerlt J.A."/>
            <person name="Almo S.C."/>
        </authorList>
    </citation>
    <scope>X-RAY CRYSTALLOGRAPHY (1.80 ANGSTROMS) OF 30-340 IN COMPLEXES WITH INDOLE-3-PYRUVATE; D-TRYPTOPHAN AND INDOLE-3-ACETATE</scope>
    <scope>FUNCTION</scope>
</reference>
<keyword id="KW-0002">3D-structure</keyword>
<keyword id="KW-0574">Periplasm</keyword>
<keyword id="KW-1185">Reference proteome</keyword>
<keyword id="KW-0732">Signal</keyword>
<keyword id="KW-0813">Transport</keyword>
<protein>
    <recommendedName>
        <fullName evidence="4">Solute-binding protein Dde_0634</fullName>
    </recommendedName>
</protein>
<comment type="function">
    <text evidence="3 4">Solute-binding protein that binds indole-3-pyruvate and indole-3-acetate (in vitro). Can also bind D-tryptophan (in vitro), but that is probably not a physiological ligand (PubMed:25540822). Probably part of a tripartite ATP-independent periplasmic (TRAP) transport system that mediates solute transport into the cytoplasm.</text>
</comment>
<comment type="subunit">
    <text evidence="1">The complex is comprised of an extracytoplasmic solute-binding protein and a heteromeric permease formed by two transmembrane proteins.</text>
</comment>
<comment type="subcellular location">
    <subcellularLocation>
        <location evidence="1">Periplasm</location>
    </subcellularLocation>
</comment>
<comment type="similarity">
    <text evidence="4">Belongs to the bacterial solute-binding protein 7 family.</text>
</comment>
<organism evidence="5">
    <name type="scientific">Oleidesulfovibrio alaskensis (strain ATCC BAA-1058 / DSM 17464 / G20)</name>
    <name type="common">Desulfovibrio alaskensis</name>
    <dbReference type="NCBI Taxonomy" id="207559"/>
    <lineage>
        <taxon>Bacteria</taxon>
        <taxon>Pseudomonadati</taxon>
        <taxon>Thermodesulfobacteriota</taxon>
        <taxon>Desulfovibrionia</taxon>
        <taxon>Desulfovibrionales</taxon>
        <taxon>Desulfovibrionaceae</taxon>
        <taxon>Oleidesulfovibrio</taxon>
    </lineage>
</organism>
<sequence length="340" mass="36923">MKSTFAALLIMVGCLVSGALLTGSEAAAAQPVTLNYANFPPASTFPCIQMEQWAHEVRTRTRGKVDVLTYPGGTLLGARNMLRGVMSGQADIGCISLAYHPGVFPVMSVFELPLGFTSAEAASSVLWELYSGLRPAELERVKVLTMFTSAPSHFMTVTPVRSLRDLQGMEIRGAGTLSAILEKLGATPVSMPMPEVPEAVQKGIIKGLFTSLDVMKDMNFAEMTGHVTRADQAVYPFAVIMNREAWERLSPDVQQVLDGLAAEHAAWTGRYLDAHVQDSMRWAEEKHGVQVHTLPEEDIAAMRRSVQPLFDAWAQRAADKGADPDAVMRTVDALKAQYGG</sequence>
<feature type="signal peptide" evidence="2">
    <location>
        <begin position="1"/>
        <end position="29"/>
    </location>
</feature>
<feature type="chain" id="PRO_5004220063" description="Solute-binding protein Dde_0634">
    <location>
        <begin position="30"/>
        <end position="340"/>
    </location>
</feature>
<feature type="binding site" evidence="8">
    <location>
        <position position="99"/>
    </location>
    <ligand>
        <name>(indol-3-yl)acetate</name>
        <dbReference type="ChEBI" id="CHEBI:30854"/>
    </ligand>
</feature>
<feature type="binding site" evidence="8">
    <location>
        <position position="172"/>
    </location>
    <ligand>
        <name>(indol-3-yl)acetate</name>
        <dbReference type="ChEBI" id="CHEBI:30854"/>
    </ligand>
</feature>
<feature type="binding site" evidence="8">
    <location>
        <begin position="210"/>
        <end position="213"/>
    </location>
    <ligand>
        <name>(indol-3-yl)acetate</name>
        <dbReference type="ChEBI" id="CHEBI:30854"/>
    </ligand>
</feature>
<feature type="binding site" evidence="8">
    <location>
        <position position="235"/>
    </location>
    <ligand>
        <name>(indol-3-yl)acetate</name>
        <dbReference type="ChEBI" id="CHEBI:30854"/>
    </ligand>
</feature>
<feature type="strand" evidence="9">
    <location>
        <begin position="32"/>
        <end position="37"/>
    </location>
</feature>
<feature type="helix" evidence="9">
    <location>
        <begin position="45"/>
        <end position="60"/>
    </location>
</feature>
<feature type="turn" evidence="9">
    <location>
        <begin position="61"/>
        <end position="63"/>
    </location>
</feature>
<feature type="strand" evidence="9">
    <location>
        <begin position="64"/>
        <end position="70"/>
    </location>
</feature>
<feature type="helix" evidence="9">
    <location>
        <begin position="71"/>
        <end position="73"/>
    </location>
</feature>
<feature type="strand" evidence="9">
    <location>
        <begin position="74"/>
        <end position="76"/>
    </location>
</feature>
<feature type="turn" evidence="9">
    <location>
        <begin position="78"/>
        <end position="80"/>
    </location>
</feature>
<feature type="helix" evidence="9">
    <location>
        <begin position="81"/>
        <end position="86"/>
    </location>
</feature>
<feature type="strand" evidence="9">
    <location>
        <begin position="89"/>
        <end position="96"/>
    </location>
</feature>
<feature type="helix" evidence="9">
    <location>
        <begin position="97"/>
        <end position="99"/>
    </location>
</feature>
<feature type="turn" evidence="9">
    <location>
        <begin position="101"/>
        <end position="103"/>
    </location>
</feature>
<feature type="helix" evidence="9">
    <location>
        <begin position="107"/>
        <end position="111"/>
    </location>
</feature>
<feature type="helix" evidence="9">
    <location>
        <begin position="119"/>
        <end position="133"/>
    </location>
</feature>
<feature type="helix" evidence="9">
    <location>
        <begin position="136"/>
        <end position="138"/>
    </location>
</feature>
<feature type="strand" evidence="9">
    <location>
        <begin position="141"/>
        <end position="148"/>
    </location>
</feature>
<feature type="strand" evidence="9">
    <location>
        <begin position="152"/>
        <end position="158"/>
    </location>
</feature>
<feature type="helix" evidence="9">
    <location>
        <begin position="163"/>
        <end position="166"/>
    </location>
</feature>
<feature type="strand" evidence="9">
    <location>
        <begin position="170"/>
        <end position="173"/>
    </location>
</feature>
<feature type="helix" evidence="9">
    <location>
        <begin position="175"/>
        <end position="184"/>
    </location>
</feature>
<feature type="strand" evidence="9">
    <location>
        <begin position="187"/>
        <end position="190"/>
    </location>
</feature>
<feature type="helix" evidence="9">
    <location>
        <begin position="193"/>
        <end position="195"/>
    </location>
</feature>
<feature type="helix" evidence="9">
    <location>
        <begin position="196"/>
        <end position="201"/>
    </location>
</feature>
<feature type="strand" evidence="9">
    <location>
        <begin position="206"/>
        <end position="210"/>
    </location>
</feature>
<feature type="helix" evidence="9">
    <location>
        <begin position="214"/>
        <end position="217"/>
    </location>
</feature>
<feature type="helix" evidence="9">
    <location>
        <begin position="220"/>
        <end position="222"/>
    </location>
</feature>
<feature type="strand" evidence="9">
    <location>
        <begin position="226"/>
        <end position="232"/>
    </location>
</feature>
<feature type="strand" evidence="9">
    <location>
        <begin position="236"/>
        <end position="241"/>
    </location>
</feature>
<feature type="helix" evidence="9">
    <location>
        <begin position="243"/>
        <end position="247"/>
    </location>
</feature>
<feature type="helix" evidence="9">
    <location>
        <begin position="251"/>
        <end position="258"/>
    </location>
</feature>
<feature type="helix" evidence="9">
    <location>
        <begin position="261"/>
        <end position="287"/>
    </location>
</feature>
<feature type="strand" evidence="9">
    <location>
        <begin position="290"/>
        <end position="292"/>
    </location>
</feature>
<feature type="helix" evidence="9">
    <location>
        <begin position="296"/>
        <end position="306"/>
    </location>
</feature>
<feature type="helix" evidence="9">
    <location>
        <begin position="308"/>
        <end position="319"/>
    </location>
</feature>
<feature type="helix" evidence="9">
    <location>
        <begin position="324"/>
        <end position="337"/>
    </location>
</feature>
<gene>
    <name evidence="5" type="ordered locus">Dde_0634</name>
</gene>
<name>DCTP2_OLEA2</name>
<evidence type="ECO:0000250" key="1">
    <source>
        <dbReference type="UniProtKB" id="P37735"/>
    </source>
</evidence>
<evidence type="ECO:0000255" key="2"/>
<evidence type="ECO:0000269" key="3">
    <source>
    </source>
</evidence>
<evidence type="ECO:0000305" key="4"/>
<evidence type="ECO:0000312" key="5">
    <source>
        <dbReference type="EMBL" id="ABB37435.1"/>
    </source>
</evidence>
<evidence type="ECO:0007744" key="6">
    <source>
        <dbReference type="PDB" id="4NAP"/>
    </source>
</evidence>
<evidence type="ECO:0007744" key="7">
    <source>
        <dbReference type="PDB" id="4PGN"/>
    </source>
</evidence>
<evidence type="ECO:0007744" key="8">
    <source>
        <dbReference type="PDB" id="4PGP"/>
    </source>
</evidence>
<evidence type="ECO:0007829" key="9">
    <source>
        <dbReference type="PDB" id="4PGN"/>
    </source>
</evidence>
<dbReference type="EMBL" id="CP000112">
    <property type="protein sequence ID" value="ABB37435.1"/>
    <property type="molecule type" value="Genomic_DNA"/>
</dbReference>
<dbReference type="RefSeq" id="WP_011366730.1">
    <property type="nucleotide sequence ID" value="NC_007519.1"/>
</dbReference>
<dbReference type="PDB" id="4NAP">
    <property type="method" value="X-ray"/>
    <property type="resolution" value="2.30 A"/>
    <property type="chains" value="A/B/C/D=30-340"/>
</dbReference>
<dbReference type="PDB" id="4PGN">
    <property type="method" value="X-ray"/>
    <property type="resolution" value="1.80 A"/>
    <property type="chains" value="A/B/C/D=30-340"/>
</dbReference>
<dbReference type="PDB" id="4PGP">
    <property type="method" value="X-ray"/>
    <property type="resolution" value="2.25 A"/>
    <property type="chains" value="A/B/C/D=30-340"/>
</dbReference>
<dbReference type="PDBsum" id="4NAP"/>
<dbReference type="PDBsum" id="4PGN"/>
<dbReference type="PDBsum" id="4PGP"/>
<dbReference type="SMR" id="Q315G1"/>
<dbReference type="STRING" id="207559.Dde_0634"/>
<dbReference type="KEGG" id="dde:Dde_0634"/>
<dbReference type="eggNOG" id="COG1638">
    <property type="taxonomic scope" value="Bacteria"/>
</dbReference>
<dbReference type="HOGENOM" id="CLU_036176_2_1_7"/>
<dbReference type="EvolutionaryTrace" id="Q315G1"/>
<dbReference type="Proteomes" id="UP000002710">
    <property type="component" value="Chromosome"/>
</dbReference>
<dbReference type="GO" id="GO:0042597">
    <property type="term" value="C:periplasmic space"/>
    <property type="evidence" value="ECO:0007669"/>
    <property type="project" value="UniProtKB-SubCell"/>
</dbReference>
<dbReference type="GO" id="GO:0055085">
    <property type="term" value="P:transmembrane transport"/>
    <property type="evidence" value="ECO:0007669"/>
    <property type="project" value="InterPro"/>
</dbReference>
<dbReference type="CDD" id="cd13665">
    <property type="entry name" value="PBP2_TRAP_Dctp3_4"/>
    <property type="match status" value="1"/>
</dbReference>
<dbReference type="Gene3D" id="3.40.190.170">
    <property type="entry name" value="Bacterial extracellular solute-binding protein, family 7"/>
    <property type="match status" value="1"/>
</dbReference>
<dbReference type="InterPro" id="IPR018389">
    <property type="entry name" value="DctP_fam"/>
</dbReference>
<dbReference type="InterPro" id="IPR038404">
    <property type="entry name" value="TRAP_DctP_sf"/>
</dbReference>
<dbReference type="NCBIfam" id="NF037995">
    <property type="entry name" value="TRAP_S1"/>
    <property type="match status" value="1"/>
</dbReference>
<dbReference type="PANTHER" id="PTHR33376">
    <property type="match status" value="1"/>
</dbReference>
<dbReference type="PANTHER" id="PTHR33376:SF15">
    <property type="entry name" value="BLL6794 PROTEIN"/>
    <property type="match status" value="1"/>
</dbReference>
<dbReference type="Pfam" id="PF03480">
    <property type="entry name" value="DctP"/>
    <property type="match status" value="1"/>
</dbReference>
<accession>Q315G1</accession>
<proteinExistence type="evidence at protein level"/>